<feature type="signal peptide" evidence="2">
    <location>
        <begin position="1"/>
        <end position="23"/>
    </location>
</feature>
<feature type="chain" id="PRO_0000394087" description="Probable exo-1,4-beta-xylosidase bxlB">
    <location>
        <begin position="24"/>
        <end position="776"/>
    </location>
</feature>
<feature type="active site" evidence="1">
    <location>
        <position position="291"/>
    </location>
</feature>
<feature type="glycosylation site" description="N-linked (GlcNAc...) asparagine" evidence="2">
    <location>
        <position position="65"/>
    </location>
</feature>
<feature type="glycosylation site" description="N-linked (GlcNAc...) asparagine" evidence="2">
    <location>
        <position position="105"/>
    </location>
</feature>
<feature type="glycosylation site" description="N-linked (GlcNAc...) asparagine" evidence="2">
    <location>
        <position position="343"/>
    </location>
</feature>
<feature type="glycosylation site" description="N-linked (GlcNAc...) asparagine" evidence="2">
    <location>
        <position position="410"/>
    </location>
</feature>
<feature type="glycosylation site" description="N-linked (GlcNAc...) asparagine" evidence="2">
    <location>
        <position position="421"/>
    </location>
</feature>
<feature type="glycosylation site" description="N-linked (GlcNAc...) asparagine" evidence="2">
    <location>
        <position position="462"/>
    </location>
</feature>
<feature type="glycosylation site" description="N-linked (GlcNAc...) asparagine" evidence="2">
    <location>
        <position position="623"/>
    </location>
</feature>
<feature type="glycosylation site" description="N-linked (GlcNAc...) asparagine" evidence="2">
    <location>
        <position position="766"/>
    </location>
</feature>
<proteinExistence type="inferred from homology"/>
<gene>
    <name type="primary">bxlB</name>
    <name type="ORF">AFLA_011080</name>
</gene>
<name>BXLB_ASPFN</name>
<dbReference type="EC" id="3.2.1.37"/>
<dbReference type="EMBL" id="EQ963486">
    <property type="protein sequence ID" value="EED45224.1"/>
    <property type="molecule type" value="Genomic_DNA"/>
</dbReference>
<dbReference type="RefSeq" id="XP_002385353.1">
    <property type="nucleotide sequence ID" value="XM_002385312.1"/>
</dbReference>
<dbReference type="SMR" id="B8NYD8"/>
<dbReference type="STRING" id="332952.B8NYD8"/>
<dbReference type="GlyCosmos" id="B8NYD8">
    <property type="glycosylation" value="8 sites, No reported glycans"/>
</dbReference>
<dbReference type="EnsemblFungi" id="EED45224">
    <property type="protein sequence ID" value="EED45224"/>
    <property type="gene ID" value="AFLA_011080"/>
</dbReference>
<dbReference type="VEuPathDB" id="FungiDB:AFLA_013398"/>
<dbReference type="eggNOG" id="ENOG502QQ55">
    <property type="taxonomic scope" value="Eukaryota"/>
</dbReference>
<dbReference type="HOGENOM" id="CLU_004542_5_3_1"/>
<dbReference type="OMA" id="WGFKGHV"/>
<dbReference type="UniPathway" id="UPA00114"/>
<dbReference type="GO" id="GO:0005576">
    <property type="term" value="C:extracellular region"/>
    <property type="evidence" value="ECO:0007669"/>
    <property type="project" value="UniProtKB-SubCell"/>
</dbReference>
<dbReference type="GO" id="GO:0046556">
    <property type="term" value="F:alpha-L-arabinofuranosidase activity"/>
    <property type="evidence" value="ECO:0007669"/>
    <property type="project" value="TreeGrafter"/>
</dbReference>
<dbReference type="GO" id="GO:0009044">
    <property type="term" value="F:xylan 1,4-beta-xylosidase activity"/>
    <property type="evidence" value="ECO:0007669"/>
    <property type="project" value="UniProtKB-EC"/>
</dbReference>
<dbReference type="GO" id="GO:0031222">
    <property type="term" value="P:arabinan catabolic process"/>
    <property type="evidence" value="ECO:0007669"/>
    <property type="project" value="TreeGrafter"/>
</dbReference>
<dbReference type="GO" id="GO:0045493">
    <property type="term" value="P:xylan catabolic process"/>
    <property type="evidence" value="ECO:0007669"/>
    <property type="project" value="UniProtKB-UniPathway"/>
</dbReference>
<dbReference type="FunFam" id="3.40.50.1700:FF:000007">
    <property type="entry name" value="Exo-1,4-beta-xylosidase xlnD"/>
    <property type="match status" value="1"/>
</dbReference>
<dbReference type="FunFam" id="3.20.20.300:FF:000013">
    <property type="entry name" value="Probable exo-1,4-beta-xylosidase xlnD"/>
    <property type="match status" value="1"/>
</dbReference>
<dbReference type="Gene3D" id="3.40.50.1700">
    <property type="entry name" value="Glycoside hydrolase family 3 C-terminal domain"/>
    <property type="match status" value="1"/>
</dbReference>
<dbReference type="Gene3D" id="3.20.20.300">
    <property type="entry name" value="Glycoside hydrolase, family 3, N-terminal domain"/>
    <property type="match status" value="1"/>
</dbReference>
<dbReference type="Gene3D" id="2.60.40.10">
    <property type="entry name" value="Immunoglobulins"/>
    <property type="match status" value="1"/>
</dbReference>
<dbReference type="InterPro" id="IPR044993">
    <property type="entry name" value="BXL"/>
</dbReference>
<dbReference type="InterPro" id="IPR026891">
    <property type="entry name" value="Fn3-like"/>
</dbReference>
<dbReference type="InterPro" id="IPR002772">
    <property type="entry name" value="Glyco_hydro_3_C"/>
</dbReference>
<dbReference type="InterPro" id="IPR036881">
    <property type="entry name" value="Glyco_hydro_3_C_sf"/>
</dbReference>
<dbReference type="InterPro" id="IPR001764">
    <property type="entry name" value="Glyco_hydro_3_N"/>
</dbReference>
<dbReference type="InterPro" id="IPR036962">
    <property type="entry name" value="Glyco_hydro_3_N_sf"/>
</dbReference>
<dbReference type="InterPro" id="IPR017853">
    <property type="entry name" value="Glycoside_hydrolase_SF"/>
</dbReference>
<dbReference type="InterPro" id="IPR013783">
    <property type="entry name" value="Ig-like_fold"/>
</dbReference>
<dbReference type="PANTHER" id="PTHR42721:SF3">
    <property type="entry name" value="BETA-D-XYLOSIDASE 5-RELATED"/>
    <property type="match status" value="1"/>
</dbReference>
<dbReference type="PANTHER" id="PTHR42721">
    <property type="entry name" value="SUGAR HYDROLASE-RELATED"/>
    <property type="match status" value="1"/>
</dbReference>
<dbReference type="Pfam" id="PF14310">
    <property type="entry name" value="Fn3-like"/>
    <property type="match status" value="1"/>
</dbReference>
<dbReference type="Pfam" id="PF00933">
    <property type="entry name" value="Glyco_hydro_3"/>
    <property type="match status" value="1"/>
</dbReference>
<dbReference type="Pfam" id="PF01915">
    <property type="entry name" value="Glyco_hydro_3_C"/>
    <property type="match status" value="1"/>
</dbReference>
<dbReference type="SMART" id="SM01217">
    <property type="entry name" value="Fn3_like"/>
    <property type="match status" value="1"/>
</dbReference>
<dbReference type="SUPFAM" id="SSF51445">
    <property type="entry name" value="(Trans)glycosidases"/>
    <property type="match status" value="1"/>
</dbReference>
<dbReference type="SUPFAM" id="SSF52279">
    <property type="entry name" value="Beta-D-glucan exohydrolase, C-terminal domain"/>
    <property type="match status" value="1"/>
</dbReference>
<protein>
    <recommendedName>
        <fullName>Probable exo-1,4-beta-xylosidase bxlB</fullName>
        <ecNumber>3.2.1.37</ecNumber>
    </recommendedName>
    <alternativeName>
        <fullName>1,4-beta-D-xylan xylohydrolase bxlB</fullName>
    </alternativeName>
    <alternativeName>
        <fullName>Beta-xylosidase bxlB</fullName>
    </alternativeName>
    <alternativeName>
        <fullName>Xylobiase bxlB</fullName>
    </alternativeName>
</protein>
<organism>
    <name type="scientific">Aspergillus flavus (strain ATCC 200026 / FGSC A1120 / IAM 13836 / NRRL 3357 / JCM 12722 / SRRC 167)</name>
    <dbReference type="NCBI Taxonomy" id="332952"/>
    <lineage>
        <taxon>Eukaryota</taxon>
        <taxon>Fungi</taxon>
        <taxon>Dikarya</taxon>
        <taxon>Ascomycota</taxon>
        <taxon>Pezizomycotina</taxon>
        <taxon>Eurotiomycetes</taxon>
        <taxon>Eurotiomycetidae</taxon>
        <taxon>Eurotiales</taxon>
        <taxon>Aspergillaceae</taxon>
        <taxon>Aspergillus</taxon>
        <taxon>Aspergillus subgen. Circumdati</taxon>
    </lineage>
</organism>
<sequence length="776" mass="84162">MVHLSPLLRPLAAFSFFTSLASTESIFPDCSTGPLSKNNVCDTSLDPVSRAKSLVAAMTLEEKINNTKYDSSGAPRLGLPAYNWWNEALHGVAEGHGVSFSDSGNFSYATSFPMPILLGAAFDDDLVKQVATVISTEARAFANGGHAGLDYWTPNINPFRDPRWGRGQETPGEDPLHLSRYVYHLVDGLQDGIGPERPKVVATCKHFAAYDLENWEGIERYAFDAVVSPQDLSEYYLPSFKTCTRDAKVDAVMCSYNSLNGIPTCADRWLLQTLLREHWGWEQTGHWVTGDCGAIDNIYADHHYVADGAHAAAAALNAGTDLDCGSVFPEYLRSALQQGLYNNQTLNNALIRLYSSLVKLGYFDPADDQPYRSIGWNEVFTPAAEELAHKATVEGIVMLKNDGTLPLKSNGTVAIIGPFANATTQLQGNYEGPPKYIRTLIWAAVHNGYKVKFSQGTDINSNSSAGFAEAISAAKEADTVIYAGGIDNTIEKESQDRTTIVWPGNQLDLIEQLSDLEKPLIVVQFGGGQVDDSSLLANAGVGALLWAGYPSQAGGAAVFDILTGKSAPAGRLPVTQYPASYVDEVPMTDMTLRPGSNNPGRTYRWYDKAVLPFGFGLHYTTFNVSWNHAEYGPYNTDSVASGTTNAPVDTELFDTFSITVTNTGNVASDYIALLFLTADRVGPEPYPIKTLVGYSRAKGIEPGQSQQVKLDVSVGSVARTAENGDLVLYPGSYKLEVDVGQDFPTATFTVSGKEKVLDEFPEPQQNATSAVTRWGR</sequence>
<evidence type="ECO:0000250" key="1"/>
<evidence type="ECO:0000255" key="2"/>
<evidence type="ECO:0000305" key="3"/>
<comment type="function">
    <text evidence="1">Xylan 1,4-beta-xylosidase involved in the hydrolysis of xylan, a major structural heterogeneous polysaccharide found in plant biomass representing the second most abundant polysaccharide in the biosphere, after cellulose.</text>
</comment>
<comment type="catalytic activity">
    <reaction>
        <text>Hydrolysis of (1-&gt;4)-beta-D-xylans, to remove successive D-xylose residues from the non-reducing termini.</text>
        <dbReference type="EC" id="3.2.1.37"/>
    </reaction>
</comment>
<comment type="pathway">
    <text>Glycan degradation; xylan degradation.</text>
</comment>
<comment type="subcellular location">
    <subcellularLocation>
        <location evidence="1">Secreted</location>
    </subcellularLocation>
</comment>
<comment type="similarity">
    <text evidence="3">Belongs to the glycosyl hydrolase 3 family.</text>
</comment>
<reference key="1">
    <citation type="journal article" date="2015" name="Genome Announc.">
        <title>Genome sequence of Aspergillus flavus NRRL 3357, a strain that causes aflatoxin contamination of food and feed.</title>
        <authorList>
            <person name="Nierman W.C."/>
            <person name="Yu J."/>
            <person name="Fedorova-Abrams N.D."/>
            <person name="Losada L."/>
            <person name="Cleveland T.E."/>
            <person name="Bhatnagar D."/>
            <person name="Bennett J.W."/>
            <person name="Dean R."/>
            <person name="Payne G.A."/>
        </authorList>
    </citation>
    <scope>NUCLEOTIDE SEQUENCE [LARGE SCALE GENOMIC DNA]</scope>
    <source>
        <strain>ATCC 200026 / FGSC A1120 / IAM 13836 / NRRL 3357 / JCM 12722 / SRRC 167</strain>
    </source>
</reference>
<accession>B8NYD8</accession>
<keyword id="KW-0119">Carbohydrate metabolism</keyword>
<keyword id="KW-0325">Glycoprotein</keyword>
<keyword id="KW-0326">Glycosidase</keyword>
<keyword id="KW-0378">Hydrolase</keyword>
<keyword id="KW-0624">Polysaccharide degradation</keyword>
<keyword id="KW-0964">Secreted</keyword>
<keyword id="KW-0732">Signal</keyword>
<keyword id="KW-0858">Xylan degradation</keyword>